<evidence type="ECO:0000255" key="1">
    <source>
        <dbReference type="HAMAP-Rule" id="MF_00051"/>
    </source>
</evidence>
<sequence>MAYKEYRDKVLHFIEEHEKWRSHTINLIASENITSPSVNRAVASGFMHKYAEGWPRQRYYQGCKYVDEVELIGVELFTKLFKSDYADLRPISGTNANQAVFFGLGQPGDKVIVLHTSHGGHISHMPFGAAGMRGLEVHTWPFDNESFNIDVDKAEKMIRELEPKIVVFGGSLFPFPHPVKELAPVAKEVGAFVVYDAAHVLGLIAGGEFQDPLREGADIMTASTHKTFPGPQGGVILYKKFADDETIAKLQWAIFPGVLSNHHLHHMAGKVITAAEMLEYGEAYAKQIVKNAKALAEALAEEGFKVIGEDQGYTKSHQVIVDVSDLHPAGGGWAAPLLEEAGIILNKNLLPWDPLEKVNEPSGLRIGVQEMTRVGMMEDEMKEIAHFMKRVLLDKEDPKKVRKDVYYFRLEYQKVYYSFDYGLPMKE</sequence>
<comment type="function">
    <text evidence="1">Catalyzes the reversible interconversion of serine and glycine with a modified folate serving as the one-carbon carrier. Also exhibits a pteridine-independent aldolase activity toward beta-hydroxyamino acids, producing glycine and aldehydes, via a retro-aldol mechanism.</text>
</comment>
<comment type="cofactor">
    <cofactor evidence="1">
        <name>pyridoxal 5'-phosphate</name>
        <dbReference type="ChEBI" id="CHEBI:597326"/>
    </cofactor>
</comment>
<comment type="pathway">
    <text evidence="1">Amino-acid biosynthesis; glycine biosynthesis; glycine from L-serine: step 1/1.</text>
</comment>
<comment type="subunit">
    <text evidence="1">Homodimer.</text>
</comment>
<comment type="subcellular location">
    <subcellularLocation>
        <location evidence="1">Cytoplasm</location>
    </subcellularLocation>
</comment>
<comment type="similarity">
    <text evidence="1">Belongs to the SHMT family.</text>
</comment>
<keyword id="KW-0028">Amino-acid biosynthesis</keyword>
<keyword id="KW-0963">Cytoplasm</keyword>
<keyword id="KW-0554">One-carbon metabolism</keyword>
<keyword id="KW-0663">Pyridoxal phosphate</keyword>
<keyword id="KW-0808">Transferase</keyword>
<accession>Q9V1B2</accession>
<accession>G8ZGM5</accession>
<organism>
    <name type="scientific">Pyrococcus abyssi (strain GE5 / Orsay)</name>
    <dbReference type="NCBI Taxonomy" id="272844"/>
    <lineage>
        <taxon>Archaea</taxon>
        <taxon>Methanobacteriati</taxon>
        <taxon>Methanobacteriota</taxon>
        <taxon>Thermococci</taxon>
        <taxon>Thermococcales</taxon>
        <taxon>Thermococcaceae</taxon>
        <taxon>Pyrococcus</taxon>
    </lineage>
</organism>
<gene>
    <name evidence="1" type="primary">glyA</name>
    <name type="ordered locus">PYRAB05150</name>
    <name type="ORF">PAB2018</name>
</gene>
<proteinExistence type="inferred from homology"/>
<name>GLYA_PYRAB</name>
<protein>
    <recommendedName>
        <fullName evidence="1">Serine hydroxymethyltransferase</fullName>
        <shortName evidence="1">SHMT</shortName>
        <shortName evidence="1">Serine methylase</shortName>
        <ecNumber evidence="1">2.1.2.-</ecNumber>
    </recommendedName>
</protein>
<feature type="chain" id="PRO_0000113719" description="Serine hydroxymethyltransferase">
    <location>
        <begin position="1"/>
        <end position="427"/>
    </location>
</feature>
<feature type="binding site" evidence="1">
    <location>
        <begin position="120"/>
        <end position="122"/>
    </location>
    <ligand>
        <name>(6S)-5,6,7,8-tetrahydrofolate</name>
        <dbReference type="ChEBI" id="CHEBI:57453"/>
    </ligand>
</feature>
<feature type="site" description="Plays an important role in substrate specificity" evidence="1">
    <location>
        <position position="225"/>
    </location>
</feature>
<feature type="modified residue" description="N6-(pyridoxal phosphate)lysine" evidence="1">
    <location>
        <position position="226"/>
    </location>
</feature>
<reference key="1">
    <citation type="journal article" date="2003" name="Mol. Microbiol.">
        <title>An integrated analysis of the genome of the hyperthermophilic archaeon Pyrococcus abyssi.</title>
        <authorList>
            <person name="Cohen G.N."/>
            <person name="Barbe V."/>
            <person name="Flament D."/>
            <person name="Galperin M."/>
            <person name="Heilig R."/>
            <person name="Lecompte O."/>
            <person name="Poch O."/>
            <person name="Prieur D."/>
            <person name="Querellou J."/>
            <person name="Ripp R."/>
            <person name="Thierry J.-C."/>
            <person name="Van der Oost J."/>
            <person name="Weissenbach J."/>
            <person name="Zivanovic Y."/>
            <person name="Forterre P."/>
        </authorList>
    </citation>
    <scope>NUCLEOTIDE SEQUENCE [LARGE SCALE GENOMIC DNA]</scope>
    <source>
        <strain>GE5 / Orsay</strain>
    </source>
</reference>
<reference key="2">
    <citation type="journal article" date="2012" name="Curr. Microbiol.">
        <title>Re-annotation of two hyperthermophilic archaea Pyrococcus abyssi GE5 and Pyrococcus furiosus DSM 3638.</title>
        <authorList>
            <person name="Gao J."/>
            <person name="Wang J."/>
        </authorList>
    </citation>
    <scope>GENOME REANNOTATION</scope>
    <source>
        <strain>GE5 / Orsay</strain>
    </source>
</reference>
<dbReference type="EC" id="2.1.2.-" evidence="1"/>
<dbReference type="EMBL" id="AJ248284">
    <property type="protein sequence ID" value="CAB49437.1"/>
    <property type="molecule type" value="Genomic_DNA"/>
</dbReference>
<dbReference type="EMBL" id="HE613800">
    <property type="protein sequence ID" value="CCE69904.1"/>
    <property type="molecule type" value="Genomic_DNA"/>
</dbReference>
<dbReference type="PIR" id="F75169">
    <property type="entry name" value="F75169"/>
</dbReference>
<dbReference type="RefSeq" id="WP_010867639.1">
    <property type="nucleotide sequence ID" value="NC_000868.1"/>
</dbReference>
<dbReference type="SMR" id="Q9V1B2"/>
<dbReference type="STRING" id="272844.PAB2018"/>
<dbReference type="KEGG" id="pab:PAB2018"/>
<dbReference type="PATRIC" id="fig|272844.11.peg.550"/>
<dbReference type="eggNOG" id="arCOG00070">
    <property type="taxonomic scope" value="Archaea"/>
</dbReference>
<dbReference type="HOGENOM" id="CLU_022477_2_1_2"/>
<dbReference type="OrthoDB" id="5821at2157"/>
<dbReference type="PhylomeDB" id="Q9V1B2"/>
<dbReference type="UniPathway" id="UPA00288">
    <property type="reaction ID" value="UER01023"/>
</dbReference>
<dbReference type="Proteomes" id="UP000000810">
    <property type="component" value="Chromosome"/>
</dbReference>
<dbReference type="Proteomes" id="UP000009139">
    <property type="component" value="Chromosome"/>
</dbReference>
<dbReference type="GO" id="GO:0005737">
    <property type="term" value="C:cytoplasm"/>
    <property type="evidence" value="ECO:0007669"/>
    <property type="project" value="UniProtKB-SubCell"/>
</dbReference>
<dbReference type="GO" id="GO:0004372">
    <property type="term" value="F:glycine hydroxymethyltransferase activity"/>
    <property type="evidence" value="ECO:0007669"/>
    <property type="project" value="UniProtKB-UniRule"/>
</dbReference>
<dbReference type="GO" id="GO:0030170">
    <property type="term" value="F:pyridoxal phosphate binding"/>
    <property type="evidence" value="ECO:0007669"/>
    <property type="project" value="UniProtKB-UniRule"/>
</dbReference>
<dbReference type="GO" id="GO:0019264">
    <property type="term" value="P:glycine biosynthetic process from serine"/>
    <property type="evidence" value="ECO:0007669"/>
    <property type="project" value="UniProtKB-UniRule"/>
</dbReference>
<dbReference type="GO" id="GO:0035999">
    <property type="term" value="P:tetrahydrofolate interconversion"/>
    <property type="evidence" value="ECO:0007669"/>
    <property type="project" value="InterPro"/>
</dbReference>
<dbReference type="CDD" id="cd00378">
    <property type="entry name" value="SHMT"/>
    <property type="match status" value="1"/>
</dbReference>
<dbReference type="FunFam" id="3.40.640.10:FF:000101">
    <property type="entry name" value="Serine hydroxymethyltransferase"/>
    <property type="match status" value="1"/>
</dbReference>
<dbReference type="FunFam" id="3.90.1150.10:FF:000114">
    <property type="entry name" value="Serine hydroxymethyltransferase"/>
    <property type="match status" value="1"/>
</dbReference>
<dbReference type="Gene3D" id="3.90.1150.10">
    <property type="entry name" value="Aspartate Aminotransferase, domain 1"/>
    <property type="match status" value="1"/>
</dbReference>
<dbReference type="Gene3D" id="3.40.640.10">
    <property type="entry name" value="Type I PLP-dependent aspartate aminotransferase-like (Major domain)"/>
    <property type="match status" value="1"/>
</dbReference>
<dbReference type="HAMAP" id="MF_00051">
    <property type="entry name" value="SHMT"/>
    <property type="match status" value="1"/>
</dbReference>
<dbReference type="InterPro" id="IPR015424">
    <property type="entry name" value="PyrdxlP-dep_Trfase"/>
</dbReference>
<dbReference type="InterPro" id="IPR015421">
    <property type="entry name" value="PyrdxlP-dep_Trfase_major"/>
</dbReference>
<dbReference type="InterPro" id="IPR015422">
    <property type="entry name" value="PyrdxlP-dep_Trfase_small"/>
</dbReference>
<dbReference type="InterPro" id="IPR001085">
    <property type="entry name" value="Ser_HO-MeTrfase"/>
</dbReference>
<dbReference type="InterPro" id="IPR049943">
    <property type="entry name" value="Ser_HO-MeTrfase-like"/>
</dbReference>
<dbReference type="InterPro" id="IPR019798">
    <property type="entry name" value="Ser_HO-MeTrfase_PLP_BS"/>
</dbReference>
<dbReference type="InterPro" id="IPR039429">
    <property type="entry name" value="SHMT-like_dom"/>
</dbReference>
<dbReference type="NCBIfam" id="NF000586">
    <property type="entry name" value="PRK00011.1"/>
    <property type="match status" value="1"/>
</dbReference>
<dbReference type="PANTHER" id="PTHR11680">
    <property type="entry name" value="SERINE HYDROXYMETHYLTRANSFERASE"/>
    <property type="match status" value="1"/>
</dbReference>
<dbReference type="PANTHER" id="PTHR11680:SF35">
    <property type="entry name" value="SERINE HYDROXYMETHYLTRANSFERASE 1"/>
    <property type="match status" value="1"/>
</dbReference>
<dbReference type="Pfam" id="PF00464">
    <property type="entry name" value="SHMT"/>
    <property type="match status" value="1"/>
</dbReference>
<dbReference type="PIRSF" id="PIRSF000412">
    <property type="entry name" value="SHMT"/>
    <property type="match status" value="1"/>
</dbReference>
<dbReference type="SUPFAM" id="SSF53383">
    <property type="entry name" value="PLP-dependent transferases"/>
    <property type="match status" value="1"/>
</dbReference>
<dbReference type="PROSITE" id="PS00096">
    <property type="entry name" value="SHMT"/>
    <property type="match status" value="1"/>
</dbReference>